<comment type="function">
    <text evidence="1">IF-3 binds to the 30S ribosomal subunit and shifts the equilibrium between 70S ribosomes and their 50S and 30S subunits in favor of the free subunits, thus enhancing the availability of 30S subunits on which protein synthesis initiation begins.</text>
</comment>
<comment type="subunit">
    <text evidence="1">Monomer.</text>
</comment>
<comment type="subcellular location">
    <subcellularLocation>
        <location evidence="1">Cytoplasm</location>
    </subcellularLocation>
</comment>
<comment type="similarity">
    <text evidence="1">Belongs to the IF-3 family.</text>
</comment>
<name>IF3_YERPS</name>
<proteinExistence type="inferred from homology"/>
<accession>Q669Z1</accession>
<reference key="1">
    <citation type="journal article" date="2004" name="Proc. Natl. Acad. Sci. U.S.A.">
        <title>Insights into the evolution of Yersinia pestis through whole-genome comparison with Yersinia pseudotuberculosis.</title>
        <authorList>
            <person name="Chain P.S.G."/>
            <person name="Carniel E."/>
            <person name="Larimer F.W."/>
            <person name="Lamerdin J."/>
            <person name="Stoutland P.O."/>
            <person name="Regala W.M."/>
            <person name="Georgescu A.M."/>
            <person name="Vergez L.M."/>
            <person name="Land M.L."/>
            <person name="Motin V.L."/>
            <person name="Brubaker R.R."/>
            <person name="Fowler J."/>
            <person name="Hinnebusch J."/>
            <person name="Marceau M."/>
            <person name="Medigue C."/>
            <person name="Simonet M."/>
            <person name="Chenal-Francisque V."/>
            <person name="Souza B."/>
            <person name="Dacheux D."/>
            <person name="Elliott J.M."/>
            <person name="Derbise A."/>
            <person name="Hauser L.J."/>
            <person name="Garcia E."/>
        </authorList>
    </citation>
    <scope>NUCLEOTIDE SEQUENCE [LARGE SCALE GENOMIC DNA]</scope>
    <source>
        <strain>IP32953</strain>
    </source>
</reference>
<dbReference type="EMBL" id="BX936398">
    <property type="protein sequence ID" value="CAH21579.1"/>
    <property type="molecule type" value="Genomic_DNA"/>
</dbReference>
<dbReference type="RefSeq" id="WP_002227898.1">
    <property type="nucleotide sequence ID" value="NZ_CP009712.1"/>
</dbReference>
<dbReference type="SMR" id="Q669Z1"/>
<dbReference type="GeneID" id="66879647"/>
<dbReference type="KEGG" id="yps:YPTB2341"/>
<dbReference type="Proteomes" id="UP000001011">
    <property type="component" value="Chromosome"/>
</dbReference>
<dbReference type="GO" id="GO:0005829">
    <property type="term" value="C:cytosol"/>
    <property type="evidence" value="ECO:0007669"/>
    <property type="project" value="TreeGrafter"/>
</dbReference>
<dbReference type="GO" id="GO:0016020">
    <property type="term" value="C:membrane"/>
    <property type="evidence" value="ECO:0007669"/>
    <property type="project" value="TreeGrafter"/>
</dbReference>
<dbReference type="GO" id="GO:0043022">
    <property type="term" value="F:ribosome binding"/>
    <property type="evidence" value="ECO:0007669"/>
    <property type="project" value="TreeGrafter"/>
</dbReference>
<dbReference type="GO" id="GO:0003743">
    <property type="term" value="F:translation initiation factor activity"/>
    <property type="evidence" value="ECO:0007669"/>
    <property type="project" value="UniProtKB-UniRule"/>
</dbReference>
<dbReference type="GO" id="GO:0032790">
    <property type="term" value="P:ribosome disassembly"/>
    <property type="evidence" value="ECO:0007669"/>
    <property type="project" value="TreeGrafter"/>
</dbReference>
<dbReference type="FunFam" id="3.10.20.80:FF:000001">
    <property type="entry name" value="Translation initiation factor IF-3"/>
    <property type="match status" value="1"/>
</dbReference>
<dbReference type="FunFam" id="3.30.110.10:FF:000001">
    <property type="entry name" value="Translation initiation factor IF-3"/>
    <property type="match status" value="1"/>
</dbReference>
<dbReference type="Gene3D" id="3.30.110.10">
    <property type="entry name" value="Translation initiation factor 3 (IF-3), C-terminal domain"/>
    <property type="match status" value="1"/>
</dbReference>
<dbReference type="Gene3D" id="3.10.20.80">
    <property type="entry name" value="Translation initiation factor 3 (IF-3), N-terminal domain"/>
    <property type="match status" value="1"/>
</dbReference>
<dbReference type="HAMAP" id="MF_00080">
    <property type="entry name" value="IF_3"/>
    <property type="match status" value="1"/>
</dbReference>
<dbReference type="InterPro" id="IPR036788">
    <property type="entry name" value="T_IF-3_C_sf"/>
</dbReference>
<dbReference type="InterPro" id="IPR036787">
    <property type="entry name" value="T_IF-3_N_sf"/>
</dbReference>
<dbReference type="InterPro" id="IPR019813">
    <property type="entry name" value="Translation_initiation_fac3_CS"/>
</dbReference>
<dbReference type="InterPro" id="IPR001288">
    <property type="entry name" value="Translation_initiation_fac_3"/>
</dbReference>
<dbReference type="InterPro" id="IPR019815">
    <property type="entry name" value="Translation_initiation_fac_3_C"/>
</dbReference>
<dbReference type="InterPro" id="IPR019814">
    <property type="entry name" value="Translation_initiation_fac_3_N"/>
</dbReference>
<dbReference type="NCBIfam" id="TIGR00168">
    <property type="entry name" value="infC"/>
    <property type="match status" value="1"/>
</dbReference>
<dbReference type="PANTHER" id="PTHR10938">
    <property type="entry name" value="TRANSLATION INITIATION FACTOR IF-3"/>
    <property type="match status" value="1"/>
</dbReference>
<dbReference type="PANTHER" id="PTHR10938:SF0">
    <property type="entry name" value="TRANSLATION INITIATION FACTOR IF-3, MITOCHONDRIAL"/>
    <property type="match status" value="1"/>
</dbReference>
<dbReference type="Pfam" id="PF00707">
    <property type="entry name" value="IF3_C"/>
    <property type="match status" value="1"/>
</dbReference>
<dbReference type="Pfam" id="PF05198">
    <property type="entry name" value="IF3_N"/>
    <property type="match status" value="1"/>
</dbReference>
<dbReference type="SUPFAM" id="SSF55200">
    <property type="entry name" value="Translation initiation factor IF3, C-terminal domain"/>
    <property type="match status" value="1"/>
</dbReference>
<dbReference type="SUPFAM" id="SSF54364">
    <property type="entry name" value="Translation initiation factor IF3, N-terminal domain"/>
    <property type="match status" value="1"/>
</dbReference>
<dbReference type="PROSITE" id="PS00938">
    <property type="entry name" value="IF3"/>
    <property type="match status" value="1"/>
</dbReference>
<feature type="chain" id="PRO_0000177612" description="Translation initiation factor IF-3">
    <location>
        <begin position="1"/>
        <end position="183"/>
    </location>
</feature>
<evidence type="ECO:0000255" key="1">
    <source>
        <dbReference type="HAMAP-Rule" id="MF_00080"/>
    </source>
</evidence>
<protein>
    <recommendedName>
        <fullName evidence="1">Translation initiation factor IF-3</fullName>
    </recommendedName>
</protein>
<gene>
    <name evidence="1" type="primary">infC</name>
    <name type="ordered locus">YPTB2341</name>
</gene>
<organism>
    <name type="scientific">Yersinia pseudotuberculosis serotype I (strain IP32953)</name>
    <dbReference type="NCBI Taxonomy" id="273123"/>
    <lineage>
        <taxon>Bacteria</taxon>
        <taxon>Pseudomonadati</taxon>
        <taxon>Pseudomonadota</taxon>
        <taxon>Gammaproteobacteria</taxon>
        <taxon>Enterobacterales</taxon>
        <taxon>Yersiniaceae</taxon>
        <taxon>Yersinia</taxon>
    </lineage>
</organism>
<keyword id="KW-0963">Cytoplasm</keyword>
<keyword id="KW-0396">Initiation factor</keyword>
<keyword id="KW-0648">Protein biosynthesis</keyword>
<sequence length="183" mass="20936">MKGGKRVQPARPNRINKEIRATEVRLTGVDGEQIGIVSLNEALEKAEEAGVDLVEISPNAEPPVCRIMDYGKFLYEKSKSTKEQKKKQKVIQVKEIKFRPGTDDGDYQVKLRNLIRFLEDGDKAKITLRFRGREMAHQQIGMEVLNRVRKDLCEDSDLAVVESFPTRIEGRQMIMVLAPKKRQ</sequence>